<comment type="function">
    <text evidence="1">Catalyzes the NADPH-dependent reduction of glutamyl-tRNA(Glu) to glutamate 1-semialdehyde (GSA).</text>
</comment>
<comment type="catalytic activity">
    <reaction evidence="1">
        <text>(S)-4-amino-5-oxopentanoate + tRNA(Glu) + NADP(+) = L-glutamyl-tRNA(Glu) + NADPH + H(+)</text>
        <dbReference type="Rhea" id="RHEA:12344"/>
        <dbReference type="Rhea" id="RHEA-COMP:9663"/>
        <dbReference type="Rhea" id="RHEA-COMP:9680"/>
        <dbReference type="ChEBI" id="CHEBI:15378"/>
        <dbReference type="ChEBI" id="CHEBI:57501"/>
        <dbReference type="ChEBI" id="CHEBI:57783"/>
        <dbReference type="ChEBI" id="CHEBI:58349"/>
        <dbReference type="ChEBI" id="CHEBI:78442"/>
        <dbReference type="ChEBI" id="CHEBI:78520"/>
        <dbReference type="EC" id="1.2.1.70"/>
    </reaction>
</comment>
<comment type="pathway">
    <text evidence="1">Porphyrin-containing compound metabolism; protoporphyrin-IX biosynthesis; 5-aminolevulinate from L-glutamyl-tRNA(Glu): step 1/2.</text>
</comment>
<comment type="subunit">
    <text evidence="1">Homodimer.</text>
</comment>
<comment type="domain">
    <text evidence="1">Possesses an unusual extended V-shaped dimeric structure with each monomer consisting of three distinct domains arranged along a curved 'spinal' alpha-helix. The N-terminal catalytic domain specifically recognizes the glutamate moiety of the substrate. The second domain is the NADPH-binding domain, and the third C-terminal domain is responsible for dimerization.</text>
</comment>
<comment type="miscellaneous">
    <text evidence="1">During catalysis, the active site Cys acts as a nucleophile attacking the alpha-carbonyl group of tRNA-bound glutamate with the formation of a thioester intermediate between enzyme and glutamate, and the concomitant release of tRNA(Glu). The thioester intermediate is finally reduced by direct hydride transfer from NADPH, to form the product GSA.</text>
</comment>
<comment type="similarity">
    <text evidence="1">Belongs to the glutamyl-tRNA reductase family.</text>
</comment>
<reference key="1">
    <citation type="journal article" date="2005" name="Genome Res.">
        <title>The Chlamydophila abortus genome sequence reveals an array of variable proteins that contribute to interspecies variation.</title>
        <authorList>
            <person name="Thomson N.R."/>
            <person name="Yeats C."/>
            <person name="Bell K."/>
            <person name="Holden M.T.G."/>
            <person name="Bentley S.D."/>
            <person name="Livingstone M."/>
            <person name="Cerdeno-Tarraga A.-M."/>
            <person name="Harris B."/>
            <person name="Doggett J."/>
            <person name="Ormond D."/>
            <person name="Mungall K."/>
            <person name="Clarke K."/>
            <person name="Feltwell T."/>
            <person name="Hance Z."/>
            <person name="Sanders M."/>
            <person name="Quail M.A."/>
            <person name="Price C."/>
            <person name="Barrell B.G."/>
            <person name="Parkhill J."/>
            <person name="Longbottom D."/>
        </authorList>
    </citation>
    <scope>NUCLEOTIDE SEQUENCE [LARGE SCALE GENOMIC DNA]</scope>
    <source>
        <strain>DSM 27085 / S26/3</strain>
    </source>
</reference>
<feature type="chain" id="PRO_1000093121" description="Glutamyl-tRNA reductase">
    <location>
        <begin position="1"/>
        <end position="338"/>
    </location>
</feature>
<feature type="active site" description="Nucleophile" evidence="1">
    <location>
        <position position="51"/>
    </location>
</feature>
<feature type="binding site" evidence="1">
    <location>
        <begin position="50"/>
        <end position="53"/>
    </location>
    <ligand>
        <name>substrate</name>
    </ligand>
</feature>
<feature type="binding site" evidence="1">
    <location>
        <position position="102"/>
    </location>
    <ligand>
        <name>substrate</name>
    </ligand>
</feature>
<feature type="binding site" evidence="1">
    <location>
        <begin position="107"/>
        <end position="109"/>
    </location>
    <ligand>
        <name>substrate</name>
    </ligand>
</feature>
<feature type="binding site" evidence="1">
    <location>
        <position position="113"/>
    </location>
    <ligand>
        <name>substrate</name>
    </ligand>
</feature>
<feature type="binding site" evidence="1">
    <location>
        <begin position="181"/>
        <end position="186"/>
    </location>
    <ligand>
        <name>NADP(+)</name>
        <dbReference type="ChEBI" id="CHEBI:58349"/>
    </ligand>
</feature>
<feature type="site" description="Important for activity" evidence="1">
    <location>
        <position position="92"/>
    </location>
</feature>
<proteinExistence type="inferred from homology"/>
<accession>Q5L782</accession>
<gene>
    <name evidence="1" type="primary">hemA</name>
    <name type="ordered locus">CAB028</name>
</gene>
<name>HEM1_CHLAB</name>
<dbReference type="EC" id="1.2.1.70" evidence="1"/>
<dbReference type="EMBL" id="CR848038">
    <property type="protein sequence ID" value="CAH63486.1"/>
    <property type="molecule type" value="Genomic_DNA"/>
</dbReference>
<dbReference type="RefSeq" id="WP_011096776.1">
    <property type="nucleotide sequence ID" value="NC_004552.2"/>
</dbReference>
<dbReference type="SMR" id="Q5L782"/>
<dbReference type="GeneID" id="93024569"/>
<dbReference type="KEGG" id="cab:CAB028"/>
<dbReference type="eggNOG" id="COG0373">
    <property type="taxonomic scope" value="Bacteria"/>
</dbReference>
<dbReference type="HOGENOM" id="CLU_035113_3_1_0"/>
<dbReference type="OrthoDB" id="110209at2"/>
<dbReference type="UniPathway" id="UPA00251">
    <property type="reaction ID" value="UER00316"/>
</dbReference>
<dbReference type="Proteomes" id="UP000001012">
    <property type="component" value="Chromosome"/>
</dbReference>
<dbReference type="GO" id="GO:0008883">
    <property type="term" value="F:glutamyl-tRNA reductase activity"/>
    <property type="evidence" value="ECO:0007669"/>
    <property type="project" value="UniProtKB-UniRule"/>
</dbReference>
<dbReference type="GO" id="GO:0050661">
    <property type="term" value="F:NADP binding"/>
    <property type="evidence" value="ECO:0007669"/>
    <property type="project" value="InterPro"/>
</dbReference>
<dbReference type="GO" id="GO:0006782">
    <property type="term" value="P:protoporphyrinogen IX biosynthetic process"/>
    <property type="evidence" value="ECO:0007669"/>
    <property type="project" value="UniProtKB-UniRule"/>
</dbReference>
<dbReference type="Gene3D" id="3.30.460.30">
    <property type="entry name" value="Glutamyl-tRNA reductase, N-terminal domain"/>
    <property type="match status" value="1"/>
</dbReference>
<dbReference type="HAMAP" id="MF_00087">
    <property type="entry name" value="Glu_tRNA_reductase"/>
    <property type="match status" value="1"/>
</dbReference>
<dbReference type="InterPro" id="IPR000343">
    <property type="entry name" value="4pyrrol_synth_GluRdtase"/>
</dbReference>
<dbReference type="InterPro" id="IPR015895">
    <property type="entry name" value="4pyrrol_synth_GluRdtase_N"/>
</dbReference>
<dbReference type="InterPro" id="IPR018214">
    <property type="entry name" value="GluRdtase_CS"/>
</dbReference>
<dbReference type="InterPro" id="IPR036343">
    <property type="entry name" value="GluRdtase_N_sf"/>
</dbReference>
<dbReference type="NCBIfam" id="NF001909">
    <property type="entry name" value="PRK00676.1"/>
    <property type="match status" value="1"/>
</dbReference>
<dbReference type="PANTHER" id="PTHR43120">
    <property type="entry name" value="GLUTAMYL-TRNA REDUCTASE 1, CHLOROPLASTIC"/>
    <property type="match status" value="1"/>
</dbReference>
<dbReference type="PANTHER" id="PTHR43120:SF1">
    <property type="entry name" value="GLUTAMYL-TRNA REDUCTASE 1, CHLOROPLASTIC"/>
    <property type="match status" value="1"/>
</dbReference>
<dbReference type="Pfam" id="PF05201">
    <property type="entry name" value="GlutR_N"/>
    <property type="match status" value="1"/>
</dbReference>
<dbReference type="SUPFAM" id="SSF69742">
    <property type="entry name" value="Glutamyl tRNA-reductase catalytic, N-terminal domain"/>
    <property type="match status" value="1"/>
</dbReference>
<dbReference type="PROSITE" id="PS00747">
    <property type="entry name" value="GLUTR"/>
    <property type="match status" value="1"/>
</dbReference>
<sequence length="338" mass="38300">MVLGVVGISYREAALKEREAVINILKDFEANSFFSQHFFGDDGSFVLLLTCHRAEIYYFSKSNRHIQSKLLSRISSLGARPYCYQGLACFTHLFTVTSGMDSLISGETEIQGQVKRAYIKAKTDRDLPFALHFLFQKALKEGKDFRSQVSLSHPVVTIESVVEETLDLHGKSTKDKLLFIGYSEINRKIAKGLSAKGYRNLIFCSRKNISIPYDTVARSQLSFREPYDVIFFGSSESAKDFSGLSLESLASIPSRVIFDFNVPRTFTLAESPKDIICLDMDFISERVQKKLQISKQCTNKEKPFLALAARKQWEVYEKKSSHIPSSQVRASRPKLLIL</sequence>
<keyword id="KW-0521">NADP</keyword>
<keyword id="KW-0560">Oxidoreductase</keyword>
<keyword id="KW-0627">Porphyrin biosynthesis</keyword>
<protein>
    <recommendedName>
        <fullName evidence="1">Glutamyl-tRNA reductase</fullName>
        <shortName evidence="1">GluTR</shortName>
        <ecNumber evidence="1">1.2.1.70</ecNumber>
    </recommendedName>
</protein>
<organism>
    <name type="scientific">Chlamydia abortus (strain DSM 27085 / S26/3)</name>
    <name type="common">Chlamydophila abortus</name>
    <dbReference type="NCBI Taxonomy" id="218497"/>
    <lineage>
        <taxon>Bacteria</taxon>
        <taxon>Pseudomonadati</taxon>
        <taxon>Chlamydiota</taxon>
        <taxon>Chlamydiia</taxon>
        <taxon>Chlamydiales</taxon>
        <taxon>Chlamydiaceae</taxon>
        <taxon>Chlamydia/Chlamydophila group</taxon>
        <taxon>Chlamydia</taxon>
    </lineage>
</organism>
<evidence type="ECO:0000255" key="1">
    <source>
        <dbReference type="HAMAP-Rule" id="MF_00087"/>
    </source>
</evidence>